<proteinExistence type="inferred from homology"/>
<name>ZAPD_PARPJ</name>
<sequence>MILYEYPFNERIRTLLRLEDLFERFTFFLTQEDAREHHVALTTLFEISEVAGRADLKSDLMKELERQRQTLAPFRGNPGIEQSALEAVLGEIEQTLAGLSQMQGKTGQHLADNEWLASIRSRAIIPGGTCKFDLPSYYAWQQIHPDQRRQDIAKWVTPLLPLRDAAIIVLRLARESGQASKVMAMQGSYQQMLSGRSYQLMQVRVAPELRVIPEASANKYMLWVRFTVQDGDLRPRAVDVDVPFQLTLCSL</sequence>
<protein>
    <recommendedName>
        <fullName evidence="1">Cell division protein ZapD</fullName>
    </recommendedName>
    <alternativeName>
        <fullName evidence="1">Z ring-associated protein D</fullName>
    </alternativeName>
</protein>
<comment type="function">
    <text evidence="1">Cell division factor that enhances FtsZ-ring assembly. Directly interacts with FtsZ and promotes bundling of FtsZ protofilaments, with a reduction in FtsZ GTPase activity.</text>
</comment>
<comment type="subunit">
    <text evidence="1">Interacts with FtsZ.</text>
</comment>
<comment type="subcellular location">
    <subcellularLocation>
        <location evidence="1">Cytoplasm</location>
    </subcellularLocation>
    <text evidence="1">Localizes to mid-cell in an FtsZ-dependent manner.</text>
</comment>
<comment type="similarity">
    <text evidence="1">Belongs to the ZapD family.</text>
</comment>
<accession>B2SYW1</accession>
<organism>
    <name type="scientific">Paraburkholderia phytofirmans (strain DSM 17436 / LMG 22146 / PsJN)</name>
    <name type="common">Burkholderia phytofirmans</name>
    <dbReference type="NCBI Taxonomy" id="398527"/>
    <lineage>
        <taxon>Bacteria</taxon>
        <taxon>Pseudomonadati</taxon>
        <taxon>Pseudomonadota</taxon>
        <taxon>Betaproteobacteria</taxon>
        <taxon>Burkholderiales</taxon>
        <taxon>Burkholderiaceae</taxon>
        <taxon>Paraburkholderia</taxon>
    </lineage>
</organism>
<feature type="chain" id="PRO_1000136933" description="Cell division protein ZapD">
    <location>
        <begin position="1"/>
        <end position="251"/>
    </location>
</feature>
<reference key="1">
    <citation type="journal article" date="2011" name="J. Bacteriol.">
        <title>Complete genome sequence of the plant growth-promoting endophyte Burkholderia phytofirmans strain PsJN.</title>
        <authorList>
            <person name="Weilharter A."/>
            <person name="Mitter B."/>
            <person name="Shin M.V."/>
            <person name="Chain P.S."/>
            <person name="Nowak J."/>
            <person name="Sessitsch A."/>
        </authorList>
    </citation>
    <scope>NUCLEOTIDE SEQUENCE [LARGE SCALE GENOMIC DNA]</scope>
    <source>
        <strain>DSM 17436 / LMG 22146 / PsJN</strain>
    </source>
</reference>
<dbReference type="EMBL" id="CP001052">
    <property type="protein sequence ID" value="ACD17846.1"/>
    <property type="molecule type" value="Genomic_DNA"/>
</dbReference>
<dbReference type="RefSeq" id="WP_012434407.1">
    <property type="nucleotide sequence ID" value="NC_010681.1"/>
</dbReference>
<dbReference type="SMR" id="B2SYW1"/>
<dbReference type="STRING" id="398527.Bphyt_3456"/>
<dbReference type="GeneID" id="97303679"/>
<dbReference type="KEGG" id="bpy:Bphyt_3456"/>
<dbReference type="eggNOG" id="COG4582">
    <property type="taxonomic scope" value="Bacteria"/>
</dbReference>
<dbReference type="HOGENOM" id="CLU_076303_0_1_4"/>
<dbReference type="OrthoDB" id="5294622at2"/>
<dbReference type="Proteomes" id="UP000001739">
    <property type="component" value="Chromosome 1"/>
</dbReference>
<dbReference type="GO" id="GO:0032153">
    <property type="term" value="C:cell division site"/>
    <property type="evidence" value="ECO:0007669"/>
    <property type="project" value="TreeGrafter"/>
</dbReference>
<dbReference type="GO" id="GO:0005737">
    <property type="term" value="C:cytoplasm"/>
    <property type="evidence" value="ECO:0007669"/>
    <property type="project" value="UniProtKB-SubCell"/>
</dbReference>
<dbReference type="GO" id="GO:0000917">
    <property type="term" value="P:division septum assembly"/>
    <property type="evidence" value="ECO:0007669"/>
    <property type="project" value="UniProtKB-KW"/>
</dbReference>
<dbReference type="GO" id="GO:0043093">
    <property type="term" value="P:FtsZ-dependent cytokinesis"/>
    <property type="evidence" value="ECO:0007669"/>
    <property type="project" value="UniProtKB-UniRule"/>
</dbReference>
<dbReference type="Gene3D" id="1.10.3900.10">
    <property type="entry name" value="YacF-like"/>
    <property type="match status" value="1"/>
</dbReference>
<dbReference type="Gene3D" id="2.60.440.10">
    <property type="entry name" value="YacF-like domains"/>
    <property type="match status" value="1"/>
</dbReference>
<dbReference type="HAMAP" id="MF_01092">
    <property type="entry name" value="ZapD"/>
    <property type="match status" value="1"/>
</dbReference>
<dbReference type="InterPro" id="IPR009777">
    <property type="entry name" value="ZapD"/>
</dbReference>
<dbReference type="InterPro" id="IPR027462">
    <property type="entry name" value="ZapD_C"/>
</dbReference>
<dbReference type="InterPro" id="IPR036268">
    <property type="entry name" value="ZapD_sf"/>
</dbReference>
<dbReference type="NCBIfam" id="NF003656">
    <property type="entry name" value="PRK05287.1-4"/>
    <property type="match status" value="1"/>
</dbReference>
<dbReference type="PANTHER" id="PTHR39455">
    <property type="entry name" value="CELL DIVISION PROTEIN ZAPD"/>
    <property type="match status" value="1"/>
</dbReference>
<dbReference type="PANTHER" id="PTHR39455:SF1">
    <property type="entry name" value="CELL DIVISION PROTEIN ZAPD"/>
    <property type="match status" value="1"/>
</dbReference>
<dbReference type="Pfam" id="PF07072">
    <property type="entry name" value="ZapD"/>
    <property type="match status" value="1"/>
</dbReference>
<dbReference type="SUPFAM" id="SSF160950">
    <property type="entry name" value="YacF-like"/>
    <property type="match status" value="1"/>
</dbReference>
<evidence type="ECO:0000255" key="1">
    <source>
        <dbReference type="HAMAP-Rule" id="MF_01092"/>
    </source>
</evidence>
<gene>
    <name evidence="1" type="primary">zapD</name>
    <name type="ordered locus">Bphyt_3456</name>
</gene>
<keyword id="KW-0131">Cell cycle</keyword>
<keyword id="KW-0132">Cell division</keyword>
<keyword id="KW-0963">Cytoplasm</keyword>
<keyword id="KW-0717">Septation</keyword>